<keyword id="KW-0460">Magnesium</keyword>
<keyword id="KW-1185">Reference proteome</keyword>
<keyword id="KW-0808">Transferase</keyword>
<reference key="1">
    <citation type="journal article" date="2003" name="Proc. Natl. Acad. Sci. U.S.A.">
        <title>The complete genome sequence of Mycobacterium bovis.</title>
        <authorList>
            <person name="Garnier T."/>
            <person name="Eiglmeier K."/>
            <person name="Camus J.-C."/>
            <person name="Medina N."/>
            <person name="Mansoor H."/>
            <person name="Pryor M."/>
            <person name="Duthoy S."/>
            <person name="Grondin S."/>
            <person name="Lacroix C."/>
            <person name="Monsempe C."/>
            <person name="Simon S."/>
            <person name="Harris B."/>
            <person name="Atkin R."/>
            <person name="Doggett J."/>
            <person name="Mayes R."/>
            <person name="Keating L."/>
            <person name="Wheeler P.R."/>
            <person name="Parkhill J."/>
            <person name="Barrell B.G."/>
            <person name="Cole S.T."/>
            <person name="Gordon S.V."/>
            <person name="Hewinson R.G."/>
        </authorList>
    </citation>
    <scope>NUCLEOTIDE SEQUENCE [LARGE SCALE GENOMIC DNA]</scope>
    <source>
        <strain>ATCC BAA-935 / AF2122/97</strain>
    </source>
</reference>
<reference key="2">
    <citation type="journal article" date="2017" name="Genome Announc.">
        <title>Updated reference genome sequence and annotation of Mycobacterium bovis AF2122/97.</title>
        <authorList>
            <person name="Malone K.M."/>
            <person name="Farrell D."/>
            <person name="Stuber T.P."/>
            <person name="Schubert O.T."/>
            <person name="Aebersold R."/>
            <person name="Robbe-Austerman S."/>
            <person name="Gordon S.V."/>
        </authorList>
    </citation>
    <scope>NUCLEOTIDE SEQUENCE [LARGE SCALE GENOMIC DNA]</scope>
    <scope>GENOME REANNOTATION</scope>
    <source>
        <strain>ATCC BAA-935 / AF2122/97</strain>
    </source>
</reference>
<reference key="3">
    <citation type="journal article" date="2001" name="J. Bacteriol.">
        <title>Use of transposon Tn5367 mutagenesis and a nitroimidazopyran-based selection system to demonstrate a requirement for fbiA and fbiB in coenzyme F(420) biosynthesis by Mycobacterium bovis BCG.</title>
        <authorList>
            <person name="Choi K.-P."/>
            <person name="Bair T.B."/>
            <person name="Bae Y.-M."/>
            <person name="Daniels L."/>
        </authorList>
    </citation>
    <scope>ROLE IN COENZYME F420 BIOSYNTHESIS</scope>
    <source>
        <strain>BCG</strain>
    </source>
</reference>
<gene>
    <name evidence="1" type="primary">fbiA</name>
    <name type="synonym">cofD</name>
    <name type="ordered locus">BQ2027_MB3289</name>
</gene>
<accession>Q7TWV4</accession>
<accession>A0A1R3Y3X0</accession>
<accession>X2BNV9</accession>
<protein>
    <recommendedName>
        <fullName evidence="1">Phosphoenolpyruvate transferase</fullName>
        <ecNumber evidence="1">2.7.8.28</ecNumber>
    </recommendedName>
    <alternativeName>
        <fullName evidence="1">EPPG:FO PEP transferase</fullName>
    </alternativeName>
</protein>
<evidence type="ECO:0000255" key="1">
    <source>
        <dbReference type="HAMAP-Rule" id="MF_01257"/>
    </source>
</evidence>
<evidence type="ECO:0000305" key="2"/>
<evidence type="ECO:0000305" key="3">
    <source>
    </source>
</evidence>
<name>FBIA_MYCBO</name>
<dbReference type="EC" id="2.7.8.28" evidence="1"/>
<dbReference type="EMBL" id="LT708304">
    <property type="protein sequence ID" value="SIU01918.1"/>
    <property type="molecule type" value="Genomic_DNA"/>
</dbReference>
<dbReference type="RefSeq" id="NP_856934.1">
    <property type="nucleotide sequence ID" value="NC_002945.3"/>
</dbReference>
<dbReference type="RefSeq" id="WP_003417087.1">
    <property type="nucleotide sequence ID" value="NC_002945.4"/>
</dbReference>
<dbReference type="SMR" id="Q7TWV4"/>
<dbReference type="GeneID" id="45427255"/>
<dbReference type="KEGG" id="mbo:BQ2027_MB3289"/>
<dbReference type="PATRIC" id="fig|233413.5.peg.3616"/>
<dbReference type="UniPathway" id="UPA00071"/>
<dbReference type="Proteomes" id="UP000001419">
    <property type="component" value="Chromosome"/>
</dbReference>
<dbReference type="GO" id="GO:0043743">
    <property type="term" value="F:LPPG:FO 2-phospho-L-lactate transferase activity"/>
    <property type="evidence" value="ECO:0007669"/>
    <property type="project" value="UniProtKB-EC"/>
</dbReference>
<dbReference type="GO" id="GO:0000287">
    <property type="term" value="F:magnesium ion binding"/>
    <property type="evidence" value="ECO:0007669"/>
    <property type="project" value="InterPro"/>
</dbReference>
<dbReference type="GO" id="GO:0052645">
    <property type="term" value="P:F420-0 metabolic process"/>
    <property type="evidence" value="ECO:0007669"/>
    <property type="project" value="UniProtKB-UniRule"/>
</dbReference>
<dbReference type="CDD" id="cd07186">
    <property type="entry name" value="CofD_like"/>
    <property type="match status" value="1"/>
</dbReference>
<dbReference type="FunFam" id="1.10.8.240:FF:000001">
    <property type="entry name" value="2-phospho-L-lactate transferase"/>
    <property type="match status" value="1"/>
</dbReference>
<dbReference type="FunFam" id="3.40.50.10680:FF:000001">
    <property type="entry name" value="2-phospho-L-lactate transferase"/>
    <property type="match status" value="1"/>
</dbReference>
<dbReference type="Gene3D" id="1.10.8.240">
    <property type="entry name" value="CofD-like domain"/>
    <property type="match status" value="1"/>
</dbReference>
<dbReference type="Gene3D" id="3.40.50.10680">
    <property type="entry name" value="CofD-like domains"/>
    <property type="match status" value="1"/>
</dbReference>
<dbReference type="HAMAP" id="MF_01257">
    <property type="entry name" value="CofD"/>
    <property type="match status" value="1"/>
</dbReference>
<dbReference type="InterPro" id="IPR002882">
    <property type="entry name" value="CofD"/>
</dbReference>
<dbReference type="InterPro" id="IPR038136">
    <property type="entry name" value="CofD-like_dom_sf"/>
</dbReference>
<dbReference type="InterPro" id="IPR010115">
    <property type="entry name" value="FbiA/CofD"/>
</dbReference>
<dbReference type="NCBIfam" id="TIGR01819">
    <property type="entry name" value="F420_cofD"/>
    <property type="match status" value="1"/>
</dbReference>
<dbReference type="PANTHER" id="PTHR43007">
    <property type="entry name" value="2-PHOSPHO-L-LACTATE TRANSFERASE"/>
    <property type="match status" value="1"/>
</dbReference>
<dbReference type="PANTHER" id="PTHR43007:SF1">
    <property type="entry name" value="2-PHOSPHO-L-LACTATE TRANSFERASE"/>
    <property type="match status" value="1"/>
</dbReference>
<dbReference type="Pfam" id="PF01933">
    <property type="entry name" value="CofD"/>
    <property type="match status" value="1"/>
</dbReference>
<dbReference type="SUPFAM" id="SSF142338">
    <property type="entry name" value="CofD-like"/>
    <property type="match status" value="1"/>
</dbReference>
<sequence length="331" mass="35335">MKVTVLAGGVGGARFLLGVQQLLGLGQFAANSAHSDADHQLSAVVNVGDDAWIHGLRVCPDLDTCMYTLGGGVDPQRGWGQRDETWHAMQELVRYGVQPDWFELGDRDLATHLVRTQMLQAGYPLSQITEALCDRWQPGARLLPATDDRCETHVVITDPVDESRKAIHFQEWWVRYRAQVPTHSFAFVGAEKSSAATEAIAALADADIIMLAPSNPVVSIGAILAVPGIRAALREATAPIVGYSPIIGEKPLRGMADTCLSVIGVDSTAAAVGRHYGARCATGILDCWLVHDGDHAEIDGVTVRSVPLLMTDPNATAEMVRAGCDLAGVVA</sequence>
<feature type="chain" id="PRO_0000145760" description="Phosphoenolpyruvate transferase">
    <location>
        <begin position="1"/>
        <end position="331"/>
    </location>
</feature>
<feature type="binding site" evidence="1">
    <location>
        <position position="63"/>
    </location>
    <ligand>
        <name>7,8-didemethyl-8-hydroxy-5-deazariboflavin</name>
        <dbReference type="ChEBI" id="CHEBI:59904"/>
    </ligand>
</feature>
<comment type="function">
    <text evidence="1">Catalyzes the transfer of the phosphoenolpyruvate moiety from enoylpyruvoyl-2-diphospho-5'-guanosine (EPPG) to 7,8-didemethyl-8-hydroxy-5-deazariboflavin (FO) with the formation of dehydro coenzyme F420-0 and GMP.</text>
</comment>
<comment type="catalytic activity">
    <reaction evidence="1">
        <text>enolpyruvoyl-2-diphospho-5'-guanosine + 7,8-didemethyl-8-hydroxy-5-deazariboflavin = dehydro coenzyme F420-0 + GMP + H(+)</text>
        <dbReference type="Rhea" id="RHEA:27510"/>
        <dbReference type="ChEBI" id="CHEBI:15378"/>
        <dbReference type="ChEBI" id="CHEBI:58115"/>
        <dbReference type="ChEBI" id="CHEBI:59904"/>
        <dbReference type="ChEBI" id="CHEBI:143701"/>
        <dbReference type="ChEBI" id="CHEBI:143705"/>
        <dbReference type="EC" id="2.7.8.28"/>
    </reaction>
</comment>
<comment type="cofactor">
    <cofactor evidence="1">
        <name>Mg(2+)</name>
        <dbReference type="ChEBI" id="CHEBI:18420"/>
    </cofactor>
</comment>
<comment type="pathway">
    <text evidence="1 3">Cofactor biosynthesis; coenzyme F420 biosynthesis.</text>
</comment>
<comment type="subunit">
    <text evidence="1">Homodimer.</text>
</comment>
<comment type="similarity">
    <text evidence="1 2">Belongs to the CofD family.</text>
</comment>
<organism>
    <name type="scientific">Mycobacterium bovis (strain ATCC BAA-935 / AF2122/97)</name>
    <dbReference type="NCBI Taxonomy" id="233413"/>
    <lineage>
        <taxon>Bacteria</taxon>
        <taxon>Bacillati</taxon>
        <taxon>Actinomycetota</taxon>
        <taxon>Actinomycetes</taxon>
        <taxon>Mycobacteriales</taxon>
        <taxon>Mycobacteriaceae</taxon>
        <taxon>Mycobacterium</taxon>
        <taxon>Mycobacterium tuberculosis complex</taxon>
    </lineage>
</organism>
<proteinExistence type="inferred from homology"/>